<comment type="function">
    <text evidence="1">DEAD-box RNA helicase involved in RNA degradation. Has RNA-dependent ATPase activity and unwinds double-stranded RNA.</text>
</comment>
<comment type="catalytic activity">
    <reaction evidence="1">
        <text>ATP + H2O = ADP + phosphate + H(+)</text>
        <dbReference type="Rhea" id="RHEA:13065"/>
        <dbReference type="ChEBI" id="CHEBI:15377"/>
        <dbReference type="ChEBI" id="CHEBI:15378"/>
        <dbReference type="ChEBI" id="CHEBI:30616"/>
        <dbReference type="ChEBI" id="CHEBI:43474"/>
        <dbReference type="ChEBI" id="CHEBI:456216"/>
        <dbReference type="EC" id="3.6.4.13"/>
    </reaction>
</comment>
<comment type="subunit">
    <text evidence="1">Component of the RNA degradosome, which is a multiprotein complex involved in RNA processing and mRNA degradation.</text>
</comment>
<comment type="subcellular location">
    <subcellularLocation>
        <location evidence="1">Cytoplasm</location>
    </subcellularLocation>
</comment>
<comment type="similarity">
    <text evidence="1">Belongs to the DEAD box helicase family. RhlB subfamily.</text>
</comment>
<dbReference type="EC" id="3.6.4.13" evidence="1"/>
<dbReference type="EMBL" id="AP008232">
    <property type="protein sequence ID" value="BAE75663.1"/>
    <property type="molecule type" value="Genomic_DNA"/>
</dbReference>
<dbReference type="RefSeq" id="WP_011412194.1">
    <property type="nucleotide sequence ID" value="NC_007712.1"/>
</dbReference>
<dbReference type="SMR" id="Q2NQB2"/>
<dbReference type="STRING" id="343509.SG2388"/>
<dbReference type="KEGG" id="sgl:SG2388"/>
<dbReference type="eggNOG" id="COG0513">
    <property type="taxonomic scope" value="Bacteria"/>
</dbReference>
<dbReference type="HOGENOM" id="CLU_003041_1_3_6"/>
<dbReference type="OrthoDB" id="9805696at2"/>
<dbReference type="BioCyc" id="SGLO343509:SGP1_RS21695-MONOMER"/>
<dbReference type="Proteomes" id="UP000001932">
    <property type="component" value="Chromosome"/>
</dbReference>
<dbReference type="GO" id="GO:0005829">
    <property type="term" value="C:cytosol"/>
    <property type="evidence" value="ECO:0007669"/>
    <property type="project" value="TreeGrafter"/>
</dbReference>
<dbReference type="GO" id="GO:0005524">
    <property type="term" value="F:ATP binding"/>
    <property type="evidence" value="ECO:0007669"/>
    <property type="project" value="UniProtKB-UniRule"/>
</dbReference>
<dbReference type="GO" id="GO:0016887">
    <property type="term" value="F:ATP hydrolysis activity"/>
    <property type="evidence" value="ECO:0007669"/>
    <property type="project" value="RHEA"/>
</dbReference>
<dbReference type="GO" id="GO:0003723">
    <property type="term" value="F:RNA binding"/>
    <property type="evidence" value="ECO:0007669"/>
    <property type="project" value="UniProtKB-UniRule"/>
</dbReference>
<dbReference type="GO" id="GO:0003724">
    <property type="term" value="F:RNA helicase activity"/>
    <property type="evidence" value="ECO:0007669"/>
    <property type="project" value="UniProtKB-UniRule"/>
</dbReference>
<dbReference type="GO" id="GO:0006401">
    <property type="term" value="P:RNA catabolic process"/>
    <property type="evidence" value="ECO:0007669"/>
    <property type="project" value="UniProtKB-UniRule"/>
</dbReference>
<dbReference type="CDD" id="cd00268">
    <property type="entry name" value="DEADc"/>
    <property type="match status" value="1"/>
</dbReference>
<dbReference type="CDD" id="cd18787">
    <property type="entry name" value="SF2_C_DEAD"/>
    <property type="match status" value="1"/>
</dbReference>
<dbReference type="FunFam" id="3.40.50.300:FF:000312">
    <property type="entry name" value="ATP-dependent RNA helicase RhlB"/>
    <property type="match status" value="1"/>
</dbReference>
<dbReference type="Gene3D" id="3.40.50.300">
    <property type="entry name" value="P-loop containing nucleotide triphosphate hydrolases"/>
    <property type="match status" value="2"/>
</dbReference>
<dbReference type="HAMAP" id="MF_00661">
    <property type="entry name" value="DEAD_helicase_RhlB"/>
    <property type="match status" value="1"/>
</dbReference>
<dbReference type="InterPro" id="IPR011545">
    <property type="entry name" value="DEAD/DEAH_box_helicase_dom"/>
</dbReference>
<dbReference type="InterPro" id="IPR050079">
    <property type="entry name" value="DEAD_box_RNA_helicase"/>
</dbReference>
<dbReference type="InterPro" id="IPR014001">
    <property type="entry name" value="Helicase_ATP-bd"/>
</dbReference>
<dbReference type="InterPro" id="IPR001650">
    <property type="entry name" value="Helicase_C-like"/>
</dbReference>
<dbReference type="InterPro" id="IPR027417">
    <property type="entry name" value="P-loop_NTPase"/>
</dbReference>
<dbReference type="InterPro" id="IPR000629">
    <property type="entry name" value="RNA-helicase_DEAD-box_CS"/>
</dbReference>
<dbReference type="InterPro" id="IPR023554">
    <property type="entry name" value="RNA_helicase_ATP-dep_RhlB"/>
</dbReference>
<dbReference type="InterPro" id="IPR014014">
    <property type="entry name" value="RNA_helicase_DEAD_Q_motif"/>
</dbReference>
<dbReference type="NCBIfam" id="NF003419">
    <property type="entry name" value="PRK04837.1"/>
    <property type="match status" value="1"/>
</dbReference>
<dbReference type="PANTHER" id="PTHR47959:SF10">
    <property type="entry name" value="ATP-DEPENDENT RNA HELICASE RHLB"/>
    <property type="match status" value="1"/>
</dbReference>
<dbReference type="PANTHER" id="PTHR47959">
    <property type="entry name" value="ATP-DEPENDENT RNA HELICASE RHLE-RELATED"/>
    <property type="match status" value="1"/>
</dbReference>
<dbReference type="Pfam" id="PF00270">
    <property type="entry name" value="DEAD"/>
    <property type="match status" value="1"/>
</dbReference>
<dbReference type="Pfam" id="PF00271">
    <property type="entry name" value="Helicase_C"/>
    <property type="match status" value="1"/>
</dbReference>
<dbReference type="SMART" id="SM00487">
    <property type="entry name" value="DEXDc"/>
    <property type="match status" value="1"/>
</dbReference>
<dbReference type="SMART" id="SM00490">
    <property type="entry name" value="HELICc"/>
    <property type="match status" value="1"/>
</dbReference>
<dbReference type="SUPFAM" id="SSF52540">
    <property type="entry name" value="P-loop containing nucleoside triphosphate hydrolases"/>
    <property type="match status" value="1"/>
</dbReference>
<dbReference type="PROSITE" id="PS00039">
    <property type="entry name" value="DEAD_ATP_HELICASE"/>
    <property type="match status" value="1"/>
</dbReference>
<dbReference type="PROSITE" id="PS51192">
    <property type="entry name" value="HELICASE_ATP_BIND_1"/>
    <property type="match status" value="1"/>
</dbReference>
<dbReference type="PROSITE" id="PS51194">
    <property type="entry name" value="HELICASE_CTER"/>
    <property type="match status" value="1"/>
</dbReference>
<dbReference type="PROSITE" id="PS51195">
    <property type="entry name" value="Q_MOTIF"/>
    <property type="match status" value="1"/>
</dbReference>
<reference key="1">
    <citation type="journal article" date="2006" name="Genome Res.">
        <title>Massive genome erosion and functional adaptations provide insights into the symbiotic lifestyle of Sodalis glossinidius in the tsetse host.</title>
        <authorList>
            <person name="Toh H."/>
            <person name="Weiss B.L."/>
            <person name="Perkin S.A.H."/>
            <person name="Yamashita A."/>
            <person name="Oshima K."/>
            <person name="Hattori M."/>
            <person name="Aksoy S."/>
        </authorList>
    </citation>
    <scope>NUCLEOTIDE SEQUENCE [LARGE SCALE GENOMIC DNA]</scope>
    <source>
        <strain>morsitans</strain>
    </source>
</reference>
<proteinExistence type="inferred from homology"/>
<organism>
    <name type="scientific">Sodalis glossinidius (strain morsitans)</name>
    <dbReference type="NCBI Taxonomy" id="343509"/>
    <lineage>
        <taxon>Bacteria</taxon>
        <taxon>Pseudomonadati</taxon>
        <taxon>Pseudomonadota</taxon>
        <taxon>Gammaproteobacteria</taxon>
        <taxon>Enterobacterales</taxon>
        <taxon>Bruguierivoracaceae</taxon>
        <taxon>Sodalis</taxon>
    </lineage>
</organism>
<keyword id="KW-0067">ATP-binding</keyword>
<keyword id="KW-0963">Cytoplasm</keyword>
<keyword id="KW-0347">Helicase</keyword>
<keyword id="KW-0378">Hydrolase</keyword>
<keyword id="KW-0547">Nucleotide-binding</keyword>
<keyword id="KW-0694">RNA-binding</keyword>
<feature type="chain" id="PRO_1000082875" description="ATP-dependent RNA helicase RhlB">
    <location>
        <begin position="1"/>
        <end position="415"/>
    </location>
</feature>
<feature type="domain" description="Helicase ATP-binding" evidence="1">
    <location>
        <begin position="40"/>
        <end position="219"/>
    </location>
</feature>
<feature type="domain" description="Helicase C-terminal" evidence="1">
    <location>
        <begin position="245"/>
        <end position="390"/>
    </location>
</feature>
<feature type="region of interest" description="Disordered" evidence="2">
    <location>
        <begin position="396"/>
        <end position="415"/>
    </location>
</feature>
<feature type="short sequence motif" description="Q motif">
    <location>
        <begin position="9"/>
        <end position="37"/>
    </location>
</feature>
<feature type="short sequence motif" description="DEAD box">
    <location>
        <begin position="165"/>
        <end position="168"/>
    </location>
</feature>
<feature type="compositionally biased region" description="Basic residues" evidence="2">
    <location>
        <begin position="398"/>
        <end position="415"/>
    </location>
</feature>
<feature type="binding site" evidence="1">
    <location>
        <begin position="53"/>
        <end position="60"/>
    </location>
    <ligand>
        <name>ATP</name>
        <dbReference type="ChEBI" id="CHEBI:30616"/>
    </ligand>
</feature>
<name>RHLB_SODGM</name>
<evidence type="ECO:0000255" key="1">
    <source>
        <dbReference type="HAMAP-Rule" id="MF_00661"/>
    </source>
</evidence>
<evidence type="ECO:0000256" key="2">
    <source>
        <dbReference type="SAM" id="MobiDB-lite"/>
    </source>
</evidence>
<accession>Q2NQB2</accession>
<gene>
    <name evidence="1" type="primary">rhlB</name>
    <name type="ordered locus">SG2388</name>
</gene>
<protein>
    <recommendedName>
        <fullName evidence="1">ATP-dependent RNA helicase RhlB</fullName>
        <ecNumber evidence="1">3.6.4.13</ecNumber>
    </recommendedName>
</protein>
<sequence>MSKTHLTEKKFSDFALYPPIVEVLDSKGFNNCTPIQALTLPTTLAGKDVAGQAQTGTGKTLAFLTATFHHLLTHPAAEGRQTNQPRALIMAPTRELAVQIHSDAEPLAQATGLKMGLAYGGDGYDKQLKVLEAGVDILVGTTGRLIDYTKQNYVNMSAIQVVVLDEADRMFDLGFIKDIRWLFRRMPAAAGRLNMLFSATLSYRVRELAFEHMNNAEYVEVEPLQKTGHRIQEELFYPSNEEKMRLLQTLIEEEWPDRCIIFANTKHRCEDIWGHLAADGHRVGLLTGDVSQKRRLRILEKFTQGALDILVATDVAARGLHIPSVTHVFNYDLPDDCEDYVHRIGRTGRAGESGCSISLACEEYALNLTAIESYIGHQIPVSKYNSDALLTDLPAPKRLTRRRSGAPRHNRKRPG</sequence>